<sequence length="422" mass="46203">MQCDFVDRILNEYDLLNAIVYRSKFTHEVKVGDVIIGGNNPIVVQSMALGGSGDVYQDAREVLELAQAGSELVRIAINSDKAIKSVPYIRDVLINHGFNSKMIIGCGQYEIARLVKQYPECALALGKIRINPGNIGFGDKRDKNFEDIIEFAIKNDIPIRIGVNWGSLDKYLAAKLMHDNSLRGTPDPDYVVLRKALVISAITSAKHAEKVGLPANKIVISCKVSKVRDLISVYTMLSKICDYPLHLGLTEAGSGVKGIVGSSAGISYLLLHGIGNTIRVSLTQQPGESRTNEVKLCQEILQSIGLRNFSVQVTSCPGCNRTNPKYFHQLVSDVNKYVADRMSVWKSANPGVENMTIAVMGCVVNGPGESKHANLGISMPGYGERSVAAVYQNGEKLCTLEGNNIFEQFVSIIENYVSIYYH</sequence>
<organism>
    <name type="scientific">Ehrlichia ruminantium (strain Gardel)</name>
    <dbReference type="NCBI Taxonomy" id="302409"/>
    <lineage>
        <taxon>Bacteria</taxon>
        <taxon>Pseudomonadati</taxon>
        <taxon>Pseudomonadota</taxon>
        <taxon>Alphaproteobacteria</taxon>
        <taxon>Rickettsiales</taxon>
        <taxon>Anaplasmataceae</taxon>
        <taxon>Ehrlichia</taxon>
    </lineage>
</organism>
<comment type="function">
    <text evidence="1">Converts 2C-methyl-D-erythritol 2,4-cyclodiphosphate (ME-2,4cPP) into 1-hydroxy-2-methyl-2-(E)-butenyl 4-diphosphate.</text>
</comment>
<comment type="catalytic activity">
    <reaction evidence="1">
        <text>(2E)-4-hydroxy-3-methylbut-2-enyl diphosphate + oxidized [flavodoxin] + H2O + 2 H(+) = 2-C-methyl-D-erythritol 2,4-cyclic diphosphate + reduced [flavodoxin]</text>
        <dbReference type="Rhea" id="RHEA:43604"/>
        <dbReference type="Rhea" id="RHEA-COMP:10622"/>
        <dbReference type="Rhea" id="RHEA-COMP:10623"/>
        <dbReference type="ChEBI" id="CHEBI:15377"/>
        <dbReference type="ChEBI" id="CHEBI:15378"/>
        <dbReference type="ChEBI" id="CHEBI:57618"/>
        <dbReference type="ChEBI" id="CHEBI:58210"/>
        <dbReference type="ChEBI" id="CHEBI:58483"/>
        <dbReference type="ChEBI" id="CHEBI:128753"/>
        <dbReference type="EC" id="1.17.7.3"/>
    </reaction>
</comment>
<comment type="cofactor">
    <cofactor evidence="1">
        <name>[4Fe-4S] cluster</name>
        <dbReference type="ChEBI" id="CHEBI:49883"/>
    </cofactor>
    <text evidence="1">Binds 1 [4Fe-4S] cluster.</text>
</comment>
<comment type="pathway">
    <text evidence="1">Isoprenoid biosynthesis; isopentenyl diphosphate biosynthesis via DXP pathway; isopentenyl diphosphate from 1-deoxy-D-xylulose 5-phosphate: step 5/6.</text>
</comment>
<comment type="similarity">
    <text evidence="1">Belongs to the IspG family.</text>
</comment>
<name>ISPG_EHRRG</name>
<proteinExistence type="inferred from homology"/>
<gene>
    <name evidence="1" type="primary">ispG</name>
    <name type="ordered locus">ERGA_CDS_04850</name>
</gene>
<reference key="1">
    <citation type="journal article" date="2006" name="J. Bacteriol.">
        <title>Comparative genomic analysis of three strains of Ehrlichia ruminantium reveals an active process of genome size plasticity.</title>
        <authorList>
            <person name="Frutos R."/>
            <person name="Viari A."/>
            <person name="Ferraz C."/>
            <person name="Morgat A."/>
            <person name="Eychenie S."/>
            <person name="Kandassamy Y."/>
            <person name="Chantal I."/>
            <person name="Bensaid A."/>
            <person name="Coissac E."/>
            <person name="Vachiery N."/>
            <person name="Demaille J."/>
            <person name="Martinez D."/>
        </authorList>
    </citation>
    <scope>NUCLEOTIDE SEQUENCE [LARGE SCALE GENOMIC DNA]</scope>
    <source>
        <strain>Gardel</strain>
    </source>
</reference>
<feature type="chain" id="PRO_0000190575" description="4-hydroxy-3-methylbut-2-en-1-yl diphosphate synthase (flavodoxin)">
    <location>
        <begin position="1"/>
        <end position="422"/>
    </location>
</feature>
<feature type="binding site" evidence="1">
    <location>
        <position position="316"/>
    </location>
    <ligand>
        <name>[4Fe-4S] cluster</name>
        <dbReference type="ChEBI" id="CHEBI:49883"/>
    </ligand>
</feature>
<feature type="binding site" evidence="1">
    <location>
        <position position="319"/>
    </location>
    <ligand>
        <name>[4Fe-4S] cluster</name>
        <dbReference type="ChEBI" id="CHEBI:49883"/>
    </ligand>
</feature>
<feature type="binding site" evidence="1">
    <location>
        <position position="362"/>
    </location>
    <ligand>
        <name>[4Fe-4S] cluster</name>
        <dbReference type="ChEBI" id="CHEBI:49883"/>
    </ligand>
</feature>
<feature type="binding site" evidence="1">
    <location>
        <position position="369"/>
    </location>
    <ligand>
        <name>[4Fe-4S] cluster</name>
        <dbReference type="ChEBI" id="CHEBI:49883"/>
    </ligand>
</feature>
<keyword id="KW-0004">4Fe-4S</keyword>
<keyword id="KW-0408">Iron</keyword>
<keyword id="KW-0411">Iron-sulfur</keyword>
<keyword id="KW-0414">Isoprene biosynthesis</keyword>
<keyword id="KW-0479">Metal-binding</keyword>
<keyword id="KW-0560">Oxidoreductase</keyword>
<dbReference type="EC" id="1.17.7.3" evidence="1"/>
<dbReference type="EMBL" id="CR925677">
    <property type="protein sequence ID" value="CAI27937.1"/>
    <property type="molecule type" value="Genomic_DNA"/>
</dbReference>
<dbReference type="RefSeq" id="WP_011255608.1">
    <property type="nucleotide sequence ID" value="NC_006831.1"/>
</dbReference>
<dbReference type="SMR" id="Q5FHA6"/>
<dbReference type="KEGG" id="erg:ERGA_CDS_04850"/>
<dbReference type="HOGENOM" id="CLU_042258_1_0_5"/>
<dbReference type="OrthoDB" id="9803214at2"/>
<dbReference type="UniPathway" id="UPA00056">
    <property type="reaction ID" value="UER00096"/>
</dbReference>
<dbReference type="Proteomes" id="UP000000533">
    <property type="component" value="Chromosome"/>
</dbReference>
<dbReference type="GO" id="GO:0051539">
    <property type="term" value="F:4 iron, 4 sulfur cluster binding"/>
    <property type="evidence" value="ECO:0007669"/>
    <property type="project" value="UniProtKB-UniRule"/>
</dbReference>
<dbReference type="GO" id="GO:0046429">
    <property type="term" value="F:4-hydroxy-3-methylbut-2-en-1-yl diphosphate synthase activity (ferredoxin)"/>
    <property type="evidence" value="ECO:0007669"/>
    <property type="project" value="UniProtKB-UniRule"/>
</dbReference>
<dbReference type="GO" id="GO:0141197">
    <property type="term" value="F:4-hydroxy-3-methylbut-2-enyl-diphosphate synthase activity (flavodoxin)"/>
    <property type="evidence" value="ECO:0007669"/>
    <property type="project" value="UniProtKB-EC"/>
</dbReference>
<dbReference type="GO" id="GO:0005506">
    <property type="term" value="F:iron ion binding"/>
    <property type="evidence" value="ECO:0007669"/>
    <property type="project" value="InterPro"/>
</dbReference>
<dbReference type="GO" id="GO:0019288">
    <property type="term" value="P:isopentenyl diphosphate biosynthetic process, methylerythritol 4-phosphate pathway"/>
    <property type="evidence" value="ECO:0007669"/>
    <property type="project" value="UniProtKB-UniRule"/>
</dbReference>
<dbReference type="GO" id="GO:0016114">
    <property type="term" value="P:terpenoid biosynthetic process"/>
    <property type="evidence" value="ECO:0007669"/>
    <property type="project" value="InterPro"/>
</dbReference>
<dbReference type="FunFam" id="3.30.413.10:FF:000012">
    <property type="entry name" value="4-hydroxy-3-methylbut-2-en-1-yl diphosphate synthase (flavodoxin)"/>
    <property type="match status" value="1"/>
</dbReference>
<dbReference type="Gene3D" id="3.20.20.20">
    <property type="entry name" value="Dihydropteroate synthase-like"/>
    <property type="match status" value="1"/>
</dbReference>
<dbReference type="Gene3D" id="3.30.413.10">
    <property type="entry name" value="Sulfite Reductase Hemoprotein, domain 1"/>
    <property type="match status" value="1"/>
</dbReference>
<dbReference type="HAMAP" id="MF_00159">
    <property type="entry name" value="IspG"/>
    <property type="match status" value="1"/>
</dbReference>
<dbReference type="InterPro" id="IPR011005">
    <property type="entry name" value="Dihydropteroate_synth-like_sf"/>
</dbReference>
<dbReference type="InterPro" id="IPR016425">
    <property type="entry name" value="IspG_bac"/>
</dbReference>
<dbReference type="InterPro" id="IPR004588">
    <property type="entry name" value="IspG_bac-typ"/>
</dbReference>
<dbReference type="InterPro" id="IPR045854">
    <property type="entry name" value="NO2/SO3_Rdtase_4Fe4S_sf"/>
</dbReference>
<dbReference type="NCBIfam" id="TIGR00612">
    <property type="entry name" value="ispG_gcpE"/>
    <property type="match status" value="1"/>
</dbReference>
<dbReference type="NCBIfam" id="NF001540">
    <property type="entry name" value="PRK00366.1"/>
    <property type="match status" value="1"/>
</dbReference>
<dbReference type="PANTHER" id="PTHR30454">
    <property type="entry name" value="4-HYDROXY-3-METHYLBUT-2-EN-1-YL DIPHOSPHATE SYNTHASE"/>
    <property type="match status" value="1"/>
</dbReference>
<dbReference type="PANTHER" id="PTHR30454:SF0">
    <property type="entry name" value="4-HYDROXY-3-METHYLBUT-2-EN-1-YL DIPHOSPHATE SYNTHASE (FERREDOXIN), CHLOROPLASTIC"/>
    <property type="match status" value="1"/>
</dbReference>
<dbReference type="Pfam" id="PF04551">
    <property type="entry name" value="GcpE"/>
    <property type="match status" value="1"/>
</dbReference>
<dbReference type="PIRSF" id="PIRSF004640">
    <property type="entry name" value="IspG"/>
    <property type="match status" value="1"/>
</dbReference>
<evidence type="ECO:0000255" key="1">
    <source>
        <dbReference type="HAMAP-Rule" id="MF_00159"/>
    </source>
</evidence>
<accession>Q5FHA6</accession>
<protein>
    <recommendedName>
        <fullName evidence="1">4-hydroxy-3-methylbut-2-en-1-yl diphosphate synthase (flavodoxin)</fullName>
        <ecNumber evidence="1">1.17.7.3</ecNumber>
    </recommendedName>
    <alternativeName>
        <fullName evidence="1">1-hydroxy-2-methyl-2-(E)-butenyl 4-diphosphate synthase</fullName>
    </alternativeName>
</protein>